<proteinExistence type="inferred from homology"/>
<gene>
    <name type="ORF">GE13821</name>
</gene>
<feature type="chain" id="PRO_0000379052" description="Protein crossbronx-like">
    <location>
        <begin position="1"/>
        <end position="266"/>
    </location>
</feature>
<feature type="domain" description="UBC core" evidence="1">
    <location>
        <begin position="15"/>
        <end position="178"/>
    </location>
</feature>
<evidence type="ECO:0000255" key="1">
    <source>
        <dbReference type="PROSITE-ProRule" id="PRU00388"/>
    </source>
</evidence>
<evidence type="ECO:0000305" key="2"/>
<organism>
    <name type="scientific">Drosophila yakuba</name>
    <name type="common">Fruit fly</name>
    <dbReference type="NCBI Taxonomy" id="7245"/>
    <lineage>
        <taxon>Eukaryota</taxon>
        <taxon>Metazoa</taxon>
        <taxon>Ecdysozoa</taxon>
        <taxon>Arthropoda</taxon>
        <taxon>Hexapoda</taxon>
        <taxon>Insecta</taxon>
        <taxon>Pterygota</taxon>
        <taxon>Neoptera</taxon>
        <taxon>Endopterygota</taxon>
        <taxon>Diptera</taxon>
        <taxon>Brachycera</taxon>
        <taxon>Muscomorpha</taxon>
        <taxon>Ephydroidea</taxon>
        <taxon>Drosophilidae</taxon>
        <taxon>Drosophila</taxon>
        <taxon>Sophophora</taxon>
    </lineage>
</organism>
<sequence>MWYSTVSNPRIALIKQGYHILAEYNLVKEELKNIYAIPSYACALHWFGVIFVHSGIYAGSVFRFSILLPDNFPEDASLLTVVFSTVILHPHICPQNRTLDLGHFLKEWRKDQHHIWHVLRYIQAIFADPEGSICTGQAASGDLVVMDEVSNMEALNMLAKSRPEYIKRVQEQAIASRNHIYDRPLTDDPHYIIVEPYCAERHLKFVDQLKSPCWKEATSMDCSQPSEYLGHIDSSRQLDEEEANQLEKLHRTRIVESHRDEAVDSV</sequence>
<accession>B4PAP8</accession>
<reference key="1">
    <citation type="journal article" date="2007" name="Nature">
        <title>Evolution of genes and genomes on the Drosophila phylogeny.</title>
        <authorList>
            <consortium name="Drosophila 12 genomes consortium"/>
        </authorList>
    </citation>
    <scope>NUCLEOTIDE SEQUENCE [LARGE SCALE GENOMIC DNA]</scope>
    <source>
        <strain>Tai18E2 / Tucson 14021-0261.01</strain>
    </source>
</reference>
<name>AKTP2_DROYA</name>
<protein>
    <recommendedName>
        <fullName>Protein crossbronx-like</fullName>
    </recommendedName>
</protein>
<comment type="similarity">
    <text evidence="1">Belongs to the ubiquitin-conjugating enzyme family. FTS subfamily.</text>
</comment>
<comment type="caution">
    <text evidence="2">Lacks the conserved Cys residue necessary for ubiquitin-conjugating enzyme E2 activity.</text>
</comment>
<dbReference type="EMBL" id="CM000158">
    <property type="protein sequence ID" value="EDW91439.1"/>
    <property type="molecule type" value="Genomic_DNA"/>
</dbReference>
<dbReference type="SMR" id="B4PAP8"/>
<dbReference type="EnsemblMetazoa" id="FBtr0260339">
    <property type="protein sequence ID" value="FBpp0258831"/>
    <property type="gene ID" value="FBgn0231469"/>
</dbReference>
<dbReference type="EnsemblMetazoa" id="XM_002091691.4">
    <property type="protein sequence ID" value="XP_002091727.1"/>
    <property type="gene ID" value="LOC6530846"/>
</dbReference>
<dbReference type="GeneID" id="6530846"/>
<dbReference type="KEGG" id="dya:Dyak_GE13821"/>
<dbReference type="eggNOG" id="KOG0429">
    <property type="taxonomic scope" value="Eukaryota"/>
</dbReference>
<dbReference type="HOGENOM" id="CLU_083049_2_0_1"/>
<dbReference type="OMA" id="DQHHIWH"/>
<dbReference type="OrthoDB" id="5596422at2759"/>
<dbReference type="PhylomeDB" id="B4PAP8"/>
<dbReference type="Proteomes" id="UP000002282">
    <property type="component" value="Chromosome 2R"/>
</dbReference>
<dbReference type="CDD" id="cd23814">
    <property type="entry name" value="UEV_AKTIP"/>
    <property type="match status" value="1"/>
</dbReference>
<dbReference type="Gene3D" id="3.10.110.10">
    <property type="entry name" value="Ubiquitin Conjugating Enzyme"/>
    <property type="match status" value="1"/>
</dbReference>
<dbReference type="InterPro" id="IPR000608">
    <property type="entry name" value="UBQ-conjugat_E2_core"/>
</dbReference>
<dbReference type="InterPro" id="IPR016135">
    <property type="entry name" value="UBQ-conjugating_enzyme/RWD"/>
</dbReference>
<dbReference type="Pfam" id="PF00179">
    <property type="entry name" value="UQ_con"/>
    <property type="match status" value="1"/>
</dbReference>
<dbReference type="SMART" id="SM00212">
    <property type="entry name" value="UBCc"/>
    <property type="match status" value="1"/>
</dbReference>
<dbReference type="SUPFAM" id="SSF54495">
    <property type="entry name" value="UBC-like"/>
    <property type="match status" value="1"/>
</dbReference>
<dbReference type="PROSITE" id="PS50127">
    <property type="entry name" value="UBC_2"/>
    <property type="match status" value="1"/>
</dbReference>